<reference key="1">
    <citation type="journal article" date="2005" name="Nature">
        <title>The map-based sequence of the rice genome.</title>
        <authorList>
            <consortium name="International rice genome sequencing project (IRGSP)"/>
        </authorList>
    </citation>
    <scope>NUCLEOTIDE SEQUENCE [LARGE SCALE GENOMIC DNA]</scope>
    <source>
        <strain>cv. Nipponbare</strain>
    </source>
</reference>
<reference key="2">
    <citation type="journal article" date="2008" name="Nucleic Acids Res.">
        <title>The rice annotation project database (RAP-DB): 2008 update.</title>
        <authorList>
            <consortium name="The rice annotation project (RAP)"/>
        </authorList>
    </citation>
    <scope>GENOME REANNOTATION</scope>
    <source>
        <strain>cv. Nipponbare</strain>
    </source>
</reference>
<reference key="3">
    <citation type="journal article" date="2013" name="Rice">
        <title>Improvement of the Oryza sativa Nipponbare reference genome using next generation sequence and optical map data.</title>
        <authorList>
            <person name="Kawahara Y."/>
            <person name="de la Bastide M."/>
            <person name="Hamilton J.P."/>
            <person name="Kanamori H."/>
            <person name="McCombie W.R."/>
            <person name="Ouyang S."/>
            <person name="Schwartz D.C."/>
            <person name="Tanaka T."/>
            <person name="Wu J."/>
            <person name="Zhou S."/>
            <person name="Childs K.L."/>
            <person name="Davidson R.M."/>
            <person name="Lin H."/>
            <person name="Quesada-Ocampo L."/>
            <person name="Vaillancourt B."/>
            <person name="Sakai H."/>
            <person name="Lee S.S."/>
            <person name="Kim J."/>
            <person name="Numa H."/>
            <person name="Itoh T."/>
            <person name="Buell C.R."/>
            <person name="Matsumoto T."/>
        </authorList>
    </citation>
    <scope>GENOME REANNOTATION</scope>
    <source>
        <strain>cv. Nipponbare</strain>
    </source>
</reference>
<reference key="4">
    <citation type="journal article" date="2005" name="PLoS Biol.">
        <title>The genomes of Oryza sativa: a history of duplications.</title>
        <authorList>
            <person name="Yu J."/>
            <person name="Wang J."/>
            <person name="Lin W."/>
            <person name="Li S."/>
            <person name="Li H."/>
            <person name="Zhou J."/>
            <person name="Ni P."/>
            <person name="Dong W."/>
            <person name="Hu S."/>
            <person name="Zeng C."/>
            <person name="Zhang J."/>
            <person name="Zhang Y."/>
            <person name="Li R."/>
            <person name="Xu Z."/>
            <person name="Li S."/>
            <person name="Li X."/>
            <person name="Zheng H."/>
            <person name="Cong L."/>
            <person name="Lin L."/>
            <person name="Yin J."/>
            <person name="Geng J."/>
            <person name="Li G."/>
            <person name="Shi J."/>
            <person name="Liu J."/>
            <person name="Lv H."/>
            <person name="Li J."/>
            <person name="Wang J."/>
            <person name="Deng Y."/>
            <person name="Ran L."/>
            <person name="Shi X."/>
            <person name="Wang X."/>
            <person name="Wu Q."/>
            <person name="Li C."/>
            <person name="Ren X."/>
            <person name="Wang J."/>
            <person name="Wang X."/>
            <person name="Li D."/>
            <person name="Liu D."/>
            <person name="Zhang X."/>
            <person name="Ji Z."/>
            <person name="Zhao W."/>
            <person name="Sun Y."/>
            <person name="Zhang Z."/>
            <person name="Bao J."/>
            <person name="Han Y."/>
            <person name="Dong L."/>
            <person name="Ji J."/>
            <person name="Chen P."/>
            <person name="Wu S."/>
            <person name="Liu J."/>
            <person name="Xiao Y."/>
            <person name="Bu D."/>
            <person name="Tan J."/>
            <person name="Yang L."/>
            <person name="Ye C."/>
            <person name="Zhang J."/>
            <person name="Xu J."/>
            <person name="Zhou Y."/>
            <person name="Yu Y."/>
            <person name="Zhang B."/>
            <person name="Zhuang S."/>
            <person name="Wei H."/>
            <person name="Liu B."/>
            <person name="Lei M."/>
            <person name="Yu H."/>
            <person name="Li Y."/>
            <person name="Xu H."/>
            <person name="Wei S."/>
            <person name="He X."/>
            <person name="Fang L."/>
            <person name="Zhang Z."/>
            <person name="Zhang Y."/>
            <person name="Huang X."/>
            <person name="Su Z."/>
            <person name="Tong W."/>
            <person name="Li J."/>
            <person name="Tong Z."/>
            <person name="Li S."/>
            <person name="Ye J."/>
            <person name="Wang L."/>
            <person name="Fang L."/>
            <person name="Lei T."/>
            <person name="Chen C.-S."/>
            <person name="Chen H.-C."/>
            <person name="Xu Z."/>
            <person name="Li H."/>
            <person name="Huang H."/>
            <person name="Zhang F."/>
            <person name="Xu H."/>
            <person name="Li N."/>
            <person name="Zhao C."/>
            <person name="Li S."/>
            <person name="Dong L."/>
            <person name="Huang Y."/>
            <person name="Li L."/>
            <person name="Xi Y."/>
            <person name="Qi Q."/>
            <person name="Li W."/>
            <person name="Zhang B."/>
            <person name="Hu W."/>
            <person name="Zhang Y."/>
            <person name="Tian X."/>
            <person name="Jiao Y."/>
            <person name="Liang X."/>
            <person name="Jin J."/>
            <person name="Gao L."/>
            <person name="Zheng W."/>
            <person name="Hao B."/>
            <person name="Liu S.-M."/>
            <person name="Wang W."/>
            <person name="Yuan L."/>
            <person name="Cao M."/>
            <person name="McDermott J."/>
            <person name="Samudrala R."/>
            <person name="Wang J."/>
            <person name="Wong G.K.-S."/>
            <person name="Yang H."/>
        </authorList>
    </citation>
    <scope>NUCLEOTIDE SEQUENCE [LARGE SCALE GENOMIC DNA]</scope>
    <source>
        <strain>cv. Nipponbare</strain>
    </source>
</reference>
<reference key="5">
    <citation type="journal article" date="2003" name="Science">
        <title>Collection, mapping, and annotation of over 28,000 cDNA clones from japonica rice.</title>
        <authorList>
            <consortium name="The rice full-length cDNA consortium"/>
        </authorList>
    </citation>
    <scope>NUCLEOTIDE SEQUENCE [LARGE SCALE MRNA]</scope>
    <source>
        <strain>cv. Nipponbare</strain>
    </source>
</reference>
<reference key="6">
    <citation type="journal article" date="2002" name="Plant Physiol.">
        <title>Cellulose synthase-like genes of rice.</title>
        <authorList>
            <person name="Hazen S.P."/>
            <person name="Scott-Craig J.S."/>
            <person name="Walton J.D."/>
        </authorList>
    </citation>
    <scope>GENE FAMILY</scope>
    <scope>NOMENCLATURE</scope>
</reference>
<keyword id="KW-0961">Cell wall biogenesis/degradation</keyword>
<keyword id="KW-0328">Glycosyltransferase</keyword>
<keyword id="KW-0333">Golgi apparatus</keyword>
<keyword id="KW-0472">Membrane</keyword>
<keyword id="KW-1185">Reference proteome</keyword>
<keyword id="KW-0808">Transferase</keyword>
<keyword id="KW-0812">Transmembrane</keyword>
<keyword id="KW-1133">Transmembrane helix</keyword>
<feature type="chain" id="PRO_0000319397" description="Cellulose synthase-like protein D5">
    <location>
        <begin position="1"/>
        <end position="1012"/>
    </location>
</feature>
<feature type="transmembrane region" description="Helical" evidence="1">
    <location>
        <begin position="150"/>
        <end position="170"/>
    </location>
</feature>
<feature type="transmembrane region" description="Helical" evidence="1">
    <location>
        <begin position="180"/>
        <end position="200"/>
    </location>
</feature>
<feature type="transmembrane region" description="Helical" evidence="1">
    <location>
        <begin position="799"/>
        <end position="819"/>
    </location>
</feature>
<feature type="transmembrane region" description="Helical" evidence="1">
    <location>
        <begin position="825"/>
        <end position="845"/>
    </location>
</feature>
<feature type="transmembrane region" description="Helical" evidence="1">
    <location>
        <begin position="871"/>
        <end position="891"/>
    </location>
</feature>
<feature type="transmembrane region" description="Helical" evidence="1">
    <location>
        <begin position="914"/>
        <end position="934"/>
    </location>
</feature>
<feature type="transmembrane region" description="Helical" evidence="1">
    <location>
        <begin position="948"/>
        <end position="968"/>
    </location>
</feature>
<feature type="transmembrane region" description="Helical" evidence="1">
    <location>
        <begin position="978"/>
        <end position="998"/>
    </location>
</feature>
<feature type="region of interest" description="Disordered" evidence="2">
    <location>
        <begin position="1"/>
        <end position="81"/>
    </location>
</feature>
<feature type="region of interest" description="Disordered" evidence="2">
    <location>
        <begin position="597"/>
        <end position="620"/>
    </location>
</feature>
<feature type="compositionally biased region" description="Low complexity" evidence="2">
    <location>
        <begin position="20"/>
        <end position="37"/>
    </location>
</feature>
<feature type="compositionally biased region" description="Basic and acidic residues" evidence="2">
    <location>
        <begin position="57"/>
        <end position="69"/>
    </location>
</feature>
<feature type="compositionally biased region" description="Gly residues" evidence="2">
    <location>
        <begin position="606"/>
        <end position="618"/>
    </location>
</feature>
<feature type="active site" evidence="1">
    <location>
        <position position="280"/>
    </location>
</feature>
<feature type="active site" evidence="1">
    <location>
        <position position="717"/>
    </location>
</feature>
<feature type="sequence conflict" description="In Ref. 5; AK072260." evidence="3" ref="5">
    <original>T</original>
    <variation>A</variation>
    <location>
        <position position="245"/>
    </location>
</feature>
<feature type="sequence conflict" description="In Ref. 5; AK072260." evidence="3" ref="5">
    <original>Q</original>
    <variation>R</variation>
    <location>
        <position position="1007"/>
    </location>
</feature>
<dbReference type="EC" id="2.4.1.-"/>
<dbReference type="EMBL" id="AP005449">
    <property type="protein sequence ID" value="BAD61907.1"/>
    <property type="molecule type" value="Genomic_DNA"/>
</dbReference>
<dbReference type="EMBL" id="AP008212">
    <property type="protein sequence ID" value="BAF19471.1"/>
    <property type="molecule type" value="Genomic_DNA"/>
</dbReference>
<dbReference type="EMBL" id="AP014962">
    <property type="protein sequence ID" value="BAS97598.1"/>
    <property type="molecule type" value="Genomic_DNA"/>
</dbReference>
<dbReference type="EMBL" id="CM000143">
    <property type="protein sequence ID" value="EAZ36878.1"/>
    <property type="molecule type" value="Genomic_DNA"/>
</dbReference>
<dbReference type="EMBL" id="AK072260">
    <property type="status" value="NOT_ANNOTATED_CDS"/>
    <property type="molecule type" value="mRNA"/>
</dbReference>
<dbReference type="RefSeq" id="XP_015642593.1">
    <property type="nucleotide sequence ID" value="XM_015787107.1"/>
</dbReference>
<dbReference type="SMR" id="Q5Z6E5"/>
<dbReference type="FunCoup" id="Q5Z6E5">
    <property type="interactions" value="13"/>
</dbReference>
<dbReference type="STRING" id="39947.Q5Z6E5"/>
<dbReference type="CAZy" id="GT2">
    <property type="family name" value="Glycosyltransferase Family 2"/>
</dbReference>
<dbReference type="PaxDb" id="39947-Q5Z6E5"/>
<dbReference type="EnsemblPlants" id="Os06t0336500-01">
    <property type="protein sequence ID" value="Os06t0336500-01"/>
    <property type="gene ID" value="Os06g0336500"/>
</dbReference>
<dbReference type="Gramene" id="Os06t0336500-01">
    <property type="protein sequence ID" value="Os06t0336500-01"/>
    <property type="gene ID" value="Os06g0336500"/>
</dbReference>
<dbReference type="KEGG" id="dosa:Os06g0336500"/>
<dbReference type="eggNOG" id="ENOG502QQH4">
    <property type="taxonomic scope" value="Eukaryota"/>
</dbReference>
<dbReference type="HOGENOM" id="CLU_001418_1_0_1"/>
<dbReference type="InParanoid" id="Q5Z6E5"/>
<dbReference type="OMA" id="IMSKVPD"/>
<dbReference type="OrthoDB" id="72851at2759"/>
<dbReference type="PlantReactome" id="R-OSA-1119314">
    <property type="pathway name" value="Cellulose biosynthesis"/>
</dbReference>
<dbReference type="Proteomes" id="UP000000763">
    <property type="component" value="Chromosome 6"/>
</dbReference>
<dbReference type="Proteomes" id="UP000007752">
    <property type="component" value="Chromosome 6"/>
</dbReference>
<dbReference type="Proteomes" id="UP000059680">
    <property type="component" value="Chromosome 6"/>
</dbReference>
<dbReference type="GO" id="GO:0000139">
    <property type="term" value="C:Golgi membrane"/>
    <property type="evidence" value="ECO:0007669"/>
    <property type="project" value="UniProtKB-SubCell"/>
</dbReference>
<dbReference type="GO" id="GO:0005886">
    <property type="term" value="C:plasma membrane"/>
    <property type="evidence" value="ECO:0000318"/>
    <property type="project" value="GO_Central"/>
</dbReference>
<dbReference type="GO" id="GO:0016760">
    <property type="term" value="F:cellulose synthase (UDP-forming) activity"/>
    <property type="evidence" value="ECO:0007669"/>
    <property type="project" value="InterPro"/>
</dbReference>
<dbReference type="GO" id="GO:0071555">
    <property type="term" value="P:cell wall organization"/>
    <property type="evidence" value="ECO:0007669"/>
    <property type="project" value="UniProtKB-KW"/>
</dbReference>
<dbReference type="GO" id="GO:0030244">
    <property type="term" value="P:cellulose biosynthetic process"/>
    <property type="evidence" value="ECO:0007669"/>
    <property type="project" value="InterPro"/>
</dbReference>
<dbReference type="GO" id="GO:0009833">
    <property type="term" value="P:plant-type primary cell wall biogenesis"/>
    <property type="evidence" value="ECO:0000318"/>
    <property type="project" value="GO_Central"/>
</dbReference>
<dbReference type="FunFam" id="3.90.550.10:FF:000027">
    <property type="entry name" value="Cellulose synthase-like protein D4"/>
    <property type="match status" value="1"/>
</dbReference>
<dbReference type="Gene3D" id="3.90.550.10">
    <property type="entry name" value="Spore Coat Polysaccharide Biosynthesis Protein SpsA, Chain A"/>
    <property type="match status" value="1"/>
</dbReference>
<dbReference type="InterPro" id="IPR005150">
    <property type="entry name" value="Cellulose_synth"/>
</dbReference>
<dbReference type="InterPro" id="IPR029044">
    <property type="entry name" value="Nucleotide-diphossugar_trans"/>
</dbReference>
<dbReference type="PANTHER" id="PTHR13301">
    <property type="entry name" value="X-BOX TRANSCRIPTION FACTOR-RELATED"/>
    <property type="match status" value="1"/>
</dbReference>
<dbReference type="Pfam" id="PF03552">
    <property type="entry name" value="Cellulose_synt"/>
    <property type="match status" value="1"/>
</dbReference>
<comment type="function">
    <text>Thought to be a Golgi-localized beta-glycan synthase that polymerize the backbones of noncellulosic polysaccharides (hemicelluloses) of plant cell wall.</text>
</comment>
<comment type="subcellular location">
    <subcellularLocation>
        <location evidence="3">Golgi apparatus membrane</location>
        <topology evidence="3">Multi-pass membrane protein</topology>
    </subcellularLocation>
</comment>
<comment type="similarity">
    <text evidence="3">Belongs to the glycosyltransferase 2 family. Plant cellulose synthase-like D subfamily.</text>
</comment>
<sequence>MSVDYANYTVLMPPTPDNQPSGGAPPAAPSAGGARPGDLPLPPYGSSSSSRLVNRRGGGDDGAKMDRRLSTARVPAPSSNKSLLVRSQTGDFDHNRWLFETKGTYGIGNAYWPQDNVYGDDGGGGAVKMEDLVEKPWKPLSRKVPIPPGILSPYRLLVLVRFVALFLFLVWRVTNPNMDALWLWGISIVCEFWFAFSWLLDQMPKLNPINRAADLAALKEKFESPSPTNPTGRSDLPGLDVFISTADPYKEPTLVTANTLLSILATEYPVEKLFVYISDDGGALLTFESMAEACAFAKVWVPFCRKHSIEPRNPDSYFTQKGDPTKGKKRPDFVKDRRWIKREYDEFKIRVNSLPDLIRRRANALNARERKLARDKQAAGDADALASVKAATWMADGTHWPGTWLDPSPDHAKGDHASIVQVMIKNPHHDVVYGEAGDHPYLDMTDVDMRIPMFAYLSREKRAGYDHNKKAGAMNAMVRASAILSNGPFMLNFDCDHYIYNCQAIREAMCYMLDRGGDRICYIQFPQRFEGIDPSDRYANHNTVFFDGNMRALDGLQGPMYVGTGCLFRRYAIYGFNPPRAIEYRGTYGQTKVPIDPRQGSEAMPGAGGGRSGGGSVGGDHELQALSTAHPDHEAPQKFGKSKMFIESIAVAEYQGRPLQDHPSVLNGRPPGALLMPRPPLDAATVAESVSVISCWYEDNTEWGQRVGWIYGSVTEDVVTGYRMHNRGWRSVYCITRRDAFRGTAPINLTDRLHQVLRWATGSVEIFFSKNNAVLASRRLKFLQRMAYLNVGIYPFTSLFLIMYCLLPALSLFSGQFIVATLDPTFLSYLLLITITLMLLCLLEVKWSGIGLEEWWRNEQFWVIGGTSAHLAAVLQGLLKVVAGIEISFTLTAKAAAEDDDDPFAELYLIKWTSLFIPPLAVIGINIIALVVGVSRTVYAEIPQYSKLLGGGFFSFWVLAHYYPFAKGLMGRRGRTPTIVYVWAGLISITVSLLWITISPPDDSVAQGGIDV</sequence>
<gene>
    <name type="primary">CSLD5</name>
    <name type="ordered locus">Os06g0336500</name>
    <name type="ordered locus">LOC_Os06g22980</name>
    <name type="ORF">OsJ_020361</name>
    <name type="ORF">P0427E01.10</name>
</gene>
<name>CSLD5_ORYSJ</name>
<accession>Q5Z6E5</accession>
<accession>A0A0P0WW80</accession>
<evidence type="ECO:0000255" key="1"/>
<evidence type="ECO:0000256" key="2">
    <source>
        <dbReference type="SAM" id="MobiDB-lite"/>
    </source>
</evidence>
<evidence type="ECO:0000305" key="3"/>
<organism>
    <name type="scientific">Oryza sativa subsp. japonica</name>
    <name type="common">Rice</name>
    <dbReference type="NCBI Taxonomy" id="39947"/>
    <lineage>
        <taxon>Eukaryota</taxon>
        <taxon>Viridiplantae</taxon>
        <taxon>Streptophyta</taxon>
        <taxon>Embryophyta</taxon>
        <taxon>Tracheophyta</taxon>
        <taxon>Spermatophyta</taxon>
        <taxon>Magnoliopsida</taxon>
        <taxon>Liliopsida</taxon>
        <taxon>Poales</taxon>
        <taxon>Poaceae</taxon>
        <taxon>BOP clade</taxon>
        <taxon>Oryzoideae</taxon>
        <taxon>Oryzeae</taxon>
        <taxon>Oryzinae</taxon>
        <taxon>Oryza</taxon>
        <taxon>Oryza sativa</taxon>
    </lineage>
</organism>
<protein>
    <recommendedName>
        <fullName>Cellulose synthase-like protein D5</fullName>
        <ecNumber>2.4.1.-</ecNumber>
    </recommendedName>
    <alternativeName>
        <fullName>OsCslD5</fullName>
    </alternativeName>
</protein>
<proteinExistence type="evidence at transcript level"/>